<evidence type="ECO:0000250" key="1"/>
<evidence type="ECO:0000305" key="2"/>
<sequence>MSYTTRQVGAKNSLDYKVYIEKDGKPISAFHDIPLYADEANGIFNMVVEIPRWTNAKLEITKEEPLNPIIQDTKKGKLRFVRNCFPHHGYIHNYGAFPQTWEDPNESHPETKAVGDNDPLDVLEIGEQVAYTGQVKQVKVLGVMALLDEGETDWKVIAIDINDPLAPKLNDIEDVEKHLPGLLRATNEWFRIYKIPDGKPENQFAFSGEAKNKKYTLDVIRECNEAWKKLISGKSADAKKIDLTNTTLSDTATYSAEAASAVPAANVLPDEPIDKSIDKWFFISGSA</sequence>
<feature type="initiator methionine" description="Removed" evidence="1">
    <location>
        <position position="1"/>
    </location>
</feature>
<feature type="chain" id="PRO_0000137583" description="Inorganic pyrophosphatase">
    <location>
        <begin position="2"/>
        <end position="287"/>
    </location>
</feature>
<feature type="binding site" evidence="1">
    <location>
        <position position="79"/>
    </location>
    <ligand>
        <name>diphosphate</name>
        <dbReference type="ChEBI" id="CHEBI:33019"/>
    </ligand>
</feature>
<feature type="binding site" evidence="1">
    <location>
        <position position="116"/>
    </location>
    <ligand>
        <name>Mg(2+)</name>
        <dbReference type="ChEBI" id="CHEBI:18420"/>
        <label>1</label>
    </ligand>
</feature>
<feature type="binding site" evidence="1">
    <location>
        <position position="121"/>
    </location>
    <ligand>
        <name>Mg(2+)</name>
        <dbReference type="ChEBI" id="CHEBI:18420"/>
        <label>1</label>
    </ligand>
</feature>
<feature type="binding site" evidence="1">
    <location>
        <position position="121"/>
    </location>
    <ligand>
        <name>Mg(2+)</name>
        <dbReference type="ChEBI" id="CHEBI:18420"/>
        <label>2</label>
    </ligand>
</feature>
<feature type="binding site" evidence="1">
    <location>
        <position position="153"/>
    </location>
    <ligand>
        <name>Mg(2+)</name>
        <dbReference type="ChEBI" id="CHEBI:18420"/>
        <label>1</label>
    </ligand>
</feature>
<reference key="1">
    <citation type="journal article" date="1989" name="Yeast">
        <title>Cloning and analysis of the Kluyveromyces lactis TRP1 gene: a chromosomal locus flanked by genes encoding inorganic pyrophosphatase and histone H3.</title>
        <authorList>
            <person name="Stark M.J.R."/>
            <person name="Milner J.S."/>
        </authorList>
    </citation>
    <scope>NUCLEOTIDE SEQUENCE [GENOMIC DNA]</scope>
</reference>
<reference key="2">
    <citation type="journal article" date="2004" name="Nature">
        <title>Genome evolution in yeasts.</title>
        <authorList>
            <person name="Dujon B."/>
            <person name="Sherman D."/>
            <person name="Fischer G."/>
            <person name="Durrens P."/>
            <person name="Casaregola S."/>
            <person name="Lafontaine I."/>
            <person name="de Montigny J."/>
            <person name="Marck C."/>
            <person name="Neuveglise C."/>
            <person name="Talla E."/>
            <person name="Goffard N."/>
            <person name="Frangeul L."/>
            <person name="Aigle M."/>
            <person name="Anthouard V."/>
            <person name="Babour A."/>
            <person name="Barbe V."/>
            <person name="Barnay S."/>
            <person name="Blanchin S."/>
            <person name="Beckerich J.-M."/>
            <person name="Beyne E."/>
            <person name="Bleykasten C."/>
            <person name="Boisrame A."/>
            <person name="Boyer J."/>
            <person name="Cattolico L."/>
            <person name="Confanioleri F."/>
            <person name="de Daruvar A."/>
            <person name="Despons L."/>
            <person name="Fabre E."/>
            <person name="Fairhead C."/>
            <person name="Ferry-Dumazet H."/>
            <person name="Groppi A."/>
            <person name="Hantraye F."/>
            <person name="Hennequin C."/>
            <person name="Jauniaux N."/>
            <person name="Joyet P."/>
            <person name="Kachouri R."/>
            <person name="Kerrest A."/>
            <person name="Koszul R."/>
            <person name="Lemaire M."/>
            <person name="Lesur I."/>
            <person name="Ma L."/>
            <person name="Muller H."/>
            <person name="Nicaud J.-M."/>
            <person name="Nikolski M."/>
            <person name="Oztas S."/>
            <person name="Ozier-Kalogeropoulos O."/>
            <person name="Pellenz S."/>
            <person name="Potier S."/>
            <person name="Richard G.-F."/>
            <person name="Straub M.-L."/>
            <person name="Suleau A."/>
            <person name="Swennen D."/>
            <person name="Tekaia F."/>
            <person name="Wesolowski-Louvel M."/>
            <person name="Westhof E."/>
            <person name="Wirth B."/>
            <person name="Zeniou-Meyer M."/>
            <person name="Zivanovic Y."/>
            <person name="Bolotin-Fukuhara M."/>
            <person name="Thierry A."/>
            <person name="Bouchier C."/>
            <person name="Caudron B."/>
            <person name="Scarpelli C."/>
            <person name="Gaillardin C."/>
            <person name="Weissenbach J."/>
            <person name="Wincker P."/>
            <person name="Souciet J.-L."/>
        </authorList>
    </citation>
    <scope>NUCLEOTIDE SEQUENCE [LARGE SCALE GENOMIC DNA]</scope>
    <source>
        <strain>ATCC 8585 / CBS 2359 / DSM 70799 / NBRC 1267 / NRRL Y-1140 / WM37</strain>
    </source>
</reference>
<reference key="3">
    <citation type="journal article" date="1990" name="Biochim. Biophys. Acta">
        <title>Conservation of functional residues between yeast and E. coli inorganic pyrophosphatases.</title>
        <authorList>
            <person name="Lahti R."/>
            <person name="Kolakowski L.F. Jr."/>
            <person name="Heinonen J."/>
            <person name="Vihinen M."/>
            <person name="Pohjanoksa K."/>
            <person name="Cooperman B.S."/>
        </authorList>
    </citation>
    <scope>SIMILARITY TO E.COLI AND YEAST PPASES</scope>
</reference>
<gene>
    <name type="primary">IPP1</name>
    <name type="synonym">IPP</name>
    <name type="ordered locus">KLLA0E17721g</name>
</gene>
<keyword id="KW-0963">Cytoplasm</keyword>
<keyword id="KW-0378">Hydrolase</keyword>
<keyword id="KW-0460">Magnesium</keyword>
<keyword id="KW-0479">Metal-binding</keyword>
<keyword id="KW-1185">Reference proteome</keyword>
<accession>P13998</accession>
<accession>Q6CMU3</accession>
<protein>
    <recommendedName>
        <fullName>Inorganic pyrophosphatase</fullName>
        <ecNumber>3.6.1.1</ecNumber>
    </recommendedName>
    <alternativeName>
        <fullName>Pyrophosphate phospho-hydrolase</fullName>
        <shortName>PPase</shortName>
    </alternativeName>
</protein>
<name>IPYR_KLULA</name>
<comment type="catalytic activity">
    <reaction>
        <text>diphosphate + H2O = 2 phosphate + H(+)</text>
        <dbReference type="Rhea" id="RHEA:24576"/>
        <dbReference type="ChEBI" id="CHEBI:15377"/>
        <dbReference type="ChEBI" id="CHEBI:15378"/>
        <dbReference type="ChEBI" id="CHEBI:33019"/>
        <dbReference type="ChEBI" id="CHEBI:43474"/>
        <dbReference type="EC" id="3.6.1.1"/>
    </reaction>
</comment>
<comment type="cofactor">
    <cofactor evidence="1">
        <name>Mg(2+)</name>
        <dbReference type="ChEBI" id="CHEBI:18420"/>
    </cofactor>
</comment>
<comment type="subunit">
    <text>Homodimer.</text>
</comment>
<comment type="subcellular location">
    <subcellularLocation>
        <location>Cytoplasm</location>
    </subcellularLocation>
</comment>
<comment type="similarity">
    <text evidence="2">Belongs to the PPase family.</text>
</comment>
<comment type="sequence caution" evidence="2">
    <conflict type="erroneous initiation">
        <sequence resource="EMBL-CDS" id="CAG99833"/>
    </conflict>
</comment>
<organism>
    <name type="scientific">Kluyveromyces lactis (strain ATCC 8585 / CBS 2359 / DSM 70799 / NBRC 1267 / NRRL Y-1140 / WM37)</name>
    <name type="common">Yeast</name>
    <name type="synonym">Candida sphaerica</name>
    <dbReference type="NCBI Taxonomy" id="284590"/>
    <lineage>
        <taxon>Eukaryota</taxon>
        <taxon>Fungi</taxon>
        <taxon>Dikarya</taxon>
        <taxon>Ascomycota</taxon>
        <taxon>Saccharomycotina</taxon>
        <taxon>Saccharomycetes</taxon>
        <taxon>Saccharomycetales</taxon>
        <taxon>Saccharomycetaceae</taxon>
        <taxon>Kluyveromyces</taxon>
    </lineage>
</organism>
<proteinExistence type="inferred from homology"/>
<dbReference type="EC" id="3.6.1.1"/>
<dbReference type="EMBL" id="X14230">
    <property type="protein sequence ID" value="CAA32446.1"/>
    <property type="molecule type" value="Genomic_DNA"/>
</dbReference>
<dbReference type="EMBL" id="CR382125">
    <property type="protein sequence ID" value="CAG99833.1"/>
    <property type="status" value="ALT_INIT"/>
    <property type="molecule type" value="Genomic_DNA"/>
</dbReference>
<dbReference type="PIR" id="S07894">
    <property type="entry name" value="PWVKL"/>
</dbReference>
<dbReference type="RefSeq" id="XP_454746.1">
    <property type="nucleotide sequence ID" value="XM_454746.1"/>
</dbReference>
<dbReference type="SMR" id="P13998"/>
<dbReference type="FunCoup" id="P13998">
    <property type="interactions" value="1089"/>
</dbReference>
<dbReference type="STRING" id="284590.P13998"/>
<dbReference type="PaxDb" id="284590-P13998"/>
<dbReference type="KEGG" id="kla:KLLA0_E17667g"/>
<dbReference type="eggNOG" id="KOG1626">
    <property type="taxonomic scope" value="Eukaryota"/>
</dbReference>
<dbReference type="HOGENOM" id="CLU_040684_0_1_1"/>
<dbReference type="InParanoid" id="P13998"/>
<dbReference type="Proteomes" id="UP000000598">
    <property type="component" value="Chromosome E"/>
</dbReference>
<dbReference type="GO" id="GO:0005737">
    <property type="term" value="C:cytoplasm"/>
    <property type="evidence" value="ECO:0007669"/>
    <property type="project" value="UniProtKB-SubCell"/>
</dbReference>
<dbReference type="GO" id="GO:0004427">
    <property type="term" value="F:inorganic diphosphate phosphatase activity"/>
    <property type="evidence" value="ECO:0007669"/>
    <property type="project" value="UniProtKB-EC"/>
</dbReference>
<dbReference type="GO" id="GO:0000287">
    <property type="term" value="F:magnesium ion binding"/>
    <property type="evidence" value="ECO:0007669"/>
    <property type="project" value="InterPro"/>
</dbReference>
<dbReference type="GO" id="GO:0006796">
    <property type="term" value="P:phosphate-containing compound metabolic process"/>
    <property type="evidence" value="ECO:0007669"/>
    <property type="project" value="InterPro"/>
</dbReference>
<dbReference type="CDD" id="cd00412">
    <property type="entry name" value="pyrophosphatase"/>
    <property type="match status" value="1"/>
</dbReference>
<dbReference type="FunFam" id="3.90.80.10:FF:000004">
    <property type="entry name" value="Inorganic pyrophosphatase"/>
    <property type="match status" value="1"/>
</dbReference>
<dbReference type="Gene3D" id="3.90.80.10">
    <property type="entry name" value="Inorganic pyrophosphatase"/>
    <property type="match status" value="1"/>
</dbReference>
<dbReference type="InterPro" id="IPR008162">
    <property type="entry name" value="Pyrophosphatase"/>
</dbReference>
<dbReference type="InterPro" id="IPR036649">
    <property type="entry name" value="Pyrophosphatase_sf"/>
</dbReference>
<dbReference type="PANTHER" id="PTHR10286">
    <property type="entry name" value="INORGANIC PYROPHOSPHATASE"/>
    <property type="match status" value="1"/>
</dbReference>
<dbReference type="Pfam" id="PF00719">
    <property type="entry name" value="Pyrophosphatase"/>
    <property type="match status" value="1"/>
</dbReference>
<dbReference type="SUPFAM" id="SSF50324">
    <property type="entry name" value="Inorganic pyrophosphatase"/>
    <property type="match status" value="1"/>
</dbReference>
<dbReference type="PROSITE" id="PS00387">
    <property type="entry name" value="PPASE"/>
    <property type="match status" value="1"/>
</dbReference>